<sequence length="150" mass="16408">MLYHLFVNNQIKLQDDFKAEAVATIRSSVFNSKGGTTVFNFLSAGENILLHISIRPGENAIVFNSRTKGGAWGPEERVPYAGKFKGPNPSITVLDHGDRFQILFDNATAIYYTKRIKENAAAIAYSAENSLFSSPVTVDIHGLLPPLPPA</sequence>
<reference key="1">
    <citation type="journal article" date="2010" name="Proc. Natl. Acad. Sci. U.S.A.">
        <title>Insights into evolution of multicellular fungi from the assembled chromosomes of the mushroom Coprinopsis cinerea (Coprinus cinereus).</title>
        <authorList>
            <person name="Stajich J.E."/>
            <person name="Wilke S.K."/>
            <person name="Ahren D."/>
            <person name="Au C.H."/>
            <person name="Birren B.W."/>
            <person name="Borodovsky M."/>
            <person name="Burns C."/>
            <person name="Canbaeck B."/>
            <person name="Casselton L.A."/>
            <person name="Cheng C.K."/>
            <person name="Deng J."/>
            <person name="Dietrich F.S."/>
            <person name="Fargo D.C."/>
            <person name="Farman M.L."/>
            <person name="Gathman A.C."/>
            <person name="Goldberg J."/>
            <person name="Guigo R."/>
            <person name="Hoegger P.J."/>
            <person name="Hooker J.B."/>
            <person name="Huggins A."/>
            <person name="James T.Y."/>
            <person name="Kamada T."/>
            <person name="Kilaru S."/>
            <person name="Kodira C."/>
            <person name="Kuees U."/>
            <person name="Kupfer D."/>
            <person name="Kwan H.S."/>
            <person name="Lomsadze A."/>
            <person name="Li W."/>
            <person name="Lilly W.W."/>
            <person name="Ma L.-J."/>
            <person name="Mackey A.J."/>
            <person name="Manning G."/>
            <person name="Martin F."/>
            <person name="Muraguchi H."/>
            <person name="Natvig D.O."/>
            <person name="Palmerini H."/>
            <person name="Ramesh M.A."/>
            <person name="Rehmeyer C.J."/>
            <person name="Roe B.A."/>
            <person name="Shenoy N."/>
            <person name="Stanke M."/>
            <person name="Ter-Hovhannisyan V."/>
            <person name="Tunlid A."/>
            <person name="Velagapudi R."/>
            <person name="Vision T.J."/>
            <person name="Zeng Q."/>
            <person name="Zolan M.E."/>
            <person name="Pukkila P.J."/>
        </authorList>
    </citation>
    <scope>NUCLEOTIDE SEQUENCE [LARGE SCALE GENOMIC DNA]</scope>
    <source>
        <strain>Okayama-7 / 130 / ATCC MYA-4618 / FGSC 9003</strain>
    </source>
</reference>
<keyword id="KW-0134">Cell wall</keyword>
<keyword id="KW-0272">Extracellular matrix</keyword>
<keyword id="KW-0293">Fruiting body</keyword>
<keyword id="KW-0430">Lectin</keyword>
<keyword id="KW-0472">Membrane</keyword>
<keyword id="KW-1185">Reference proteome</keyword>
<keyword id="KW-0964">Secreted</keyword>
<accession>A8NSH0</accession>
<proteinExistence type="evidence at transcript level"/>
<dbReference type="EMBL" id="AACS02000008">
    <property type="protein sequence ID" value="EAU85786.2"/>
    <property type="molecule type" value="Genomic_DNA"/>
</dbReference>
<dbReference type="RefSeq" id="XP_001836010.2">
    <property type="nucleotide sequence ID" value="XM_001835958.2"/>
</dbReference>
<dbReference type="SMR" id="A8NSH0"/>
<dbReference type="GeneID" id="6012550"/>
<dbReference type="KEGG" id="cci:CC1G_05003"/>
<dbReference type="VEuPathDB" id="FungiDB:CC1G_05003"/>
<dbReference type="eggNOG" id="ENOG502SYUU">
    <property type="taxonomic scope" value="Eukaryota"/>
</dbReference>
<dbReference type="HOGENOM" id="CLU_117277_0_0_1"/>
<dbReference type="InParanoid" id="A8NSH0"/>
<dbReference type="OMA" id="VRVWINI"/>
<dbReference type="OrthoDB" id="3018764at2759"/>
<dbReference type="Proteomes" id="UP000001861">
    <property type="component" value="Unassembled WGS sequence"/>
</dbReference>
<dbReference type="GO" id="GO:0012505">
    <property type="term" value="C:endomembrane system"/>
    <property type="evidence" value="ECO:0007669"/>
    <property type="project" value="UniProtKB-SubCell"/>
</dbReference>
<dbReference type="GO" id="GO:0005576">
    <property type="term" value="C:extracellular region"/>
    <property type="evidence" value="ECO:0007669"/>
    <property type="project" value="UniProtKB-KW"/>
</dbReference>
<dbReference type="GO" id="GO:0016020">
    <property type="term" value="C:membrane"/>
    <property type="evidence" value="ECO:0007669"/>
    <property type="project" value="UniProtKB-KW"/>
</dbReference>
<dbReference type="GO" id="GO:0030246">
    <property type="term" value="F:carbohydrate binding"/>
    <property type="evidence" value="ECO:0007669"/>
    <property type="project" value="UniProtKB-KW"/>
</dbReference>
<dbReference type="CDD" id="cd00070">
    <property type="entry name" value="GLECT"/>
    <property type="match status" value="1"/>
</dbReference>
<dbReference type="Gene3D" id="2.60.120.200">
    <property type="match status" value="1"/>
</dbReference>
<dbReference type="InterPro" id="IPR013320">
    <property type="entry name" value="ConA-like_dom_sf"/>
</dbReference>
<dbReference type="InterPro" id="IPR001079">
    <property type="entry name" value="Galectin_CRD"/>
</dbReference>
<dbReference type="Pfam" id="PF00337">
    <property type="entry name" value="Gal-bind_lectin"/>
    <property type="match status" value="1"/>
</dbReference>
<dbReference type="SMART" id="SM00276">
    <property type="entry name" value="GLECT"/>
    <property type="match status" value="1"/>
</dbReference>
<dbReference type="SUPFAM" id="SSF49899">
    <property type="entry name" value="Concanavalin A-like lectins/glucanases"/>
    <property type="match status" value="1"/>
</dbReference>
<dbReference type="PROSITE" id="PS51304">
    <property type="entry name" value="GALECTIN"/>
    <property type="match status" value="1"/>
</dbReference>
<evidence type="ECO:0000250" key="1"/>
<evidence type="ECO:0000255" key="2">
    <source>
        <dbReference type="PROSITE-ProRule" id="PRU00639"/>
    </source>
</evidence>
<comment type="function">
    <text evidence="1">Binds lactose. May play a role in fruiting body formation (By similarity).</text>
</comment>
<comment type="subunit">
    <text evidence="1">Homotetramer. Oligomerization is required for carbohydrate binding.</text>
</comment>
<comment type="subcellular location">
    <subcellularLocation>
        <location evidence="1">Secreted</location>
        <location evidence="1">Extracellular space</location>
        <location evidence="1">Extracellular matrix</location>
    </subcellularLocation>
    <subcellularLocation>
        <location evidence="1">Secreted</location>
        <location evidence="1">Cell wall</location>
    </subcellularLocation>
    <subcellularLocation>
        <location evidence="1">Endomembrane system</location>
    </subcellularLocation>
    <text evidence="1">Detected in extracellular matrix, cell wall and cytoplasmic membrane-bound bodies.</text>
</comment>
<comment type="tissue specificity">
    <text>Most abundant in fruiting bodies. Very low levels of expression in asexual vegetative mycelia.</text>
</comment>
<comment type="developmental stage">
    <text>Most abundant prior to premeiotic S-phase, remains high from karyogamy to early pachytene, declines drastically by late pachytene and diplotene, and is undetectable by sterigma stage.</text>
</comment>
<comment type="induction">
    <text evidence="1">Repressed by continuous light.</text>
</comment>
<protein>
    <recommendedName>
        <fullName>Galectin-1</fullName>
    </recommendedName>
</protein>
<organism>
    <name type="scientific">Coprinopsis cinerea (strain Okayama-7 / 130 / ATCC MYA-4618 / FGSC 9003)</name>
    <name type="common">Inky cap fungus</name>
    <name type="synonym">Hormographiella aspergillata</name>
    <dbReference type="NCBI Taxonomy" id="240176"/>
    <lineage>
        <taxon>Eukaryota</taxon>
        <taxon>Fungi</taxon>
        <taxon>Dikarya</taxon>
        <taxon>Basidiomycota</taxon>
        <taxon>Agaricomycotina</taxon>
        <taxon>Agaricomycetes</taxon>
        <taxon>Agaricomycetidae</taxon>
        <taxon>Agaricales</taxon>
        <taxon>Agaricineae</taxon>
        <taxon>Psathyrellaceae</taxon>
        <taxon>Coprinopsis</taxon>
    </lineage>
</organism>
<feature type="chain" id="PRO_0000333261" description="Galectin-1">
    <location>
        <begin position="1"/>
        <end position="150"/>
    </location>
</feature>
<feature type="domain" description="Galectin" evidence="2">
    <location>
        <begin position="9"/>
        <end position="141"/>
    </location>
</feature>
<feature type="binding site" evidence="1">
    <location>
        <position position="51"/>
    </location>
    <ligand>
        <name>a carbohydrate</name>
        <dbReference type="ChEBI" id="CHEBI:16646"/>
    </ligand>
</feature>
<feature type="binding site" evidence="1">
    <location>
        <position position="55"/>
    </location>
    <ligand>
        <name>a carbohydrate</name>
        <dbReference type="ChEBI" id="CHEBI:16646"/>
    </ligand>
</feature>
<feature type="binding site" evidence="1">
    <location>
        <position position="64"/>
    </location>
    <ligand>
        <name>a carbohydrate</name>
        <dbReference type="ChEBI" id="CHEBI:16646"/>
    </ligand>
</feature>
<feature type="binding site" evidence="1">
    <location>
        <position position="75"/>
    </location>
    <ligand>
        <name>a carbohydrate</name>
        <dbReference type="ChEBI" id="CHEBI:16646"/>
    </ligand>
</feature>
<gene>
    <name type="primary">Cgl1</name>
    <name type="ORF">CC1G_05003</name>
</gene>
<name>CGL1_COPC7</name>